<protein>
    <recommendedName>
        <fullName>Pentatricopeptide repeat-containing protein At5g15280, mitochondrial</fullName>
    </recommendedName>
</protein>
<sequence length="1227" mass="139609">MLNLLSISSSSRLRFLNKVSSLTYHYSFAFFSTSSPASSSSSSLGNDSAIPRNYESSSFNLLSRSKEKRDLTGSSLKDLLFDLSDVVPNITRRFRRFPGLKPEDVLELSLGFESELQRGGIGNIKVQALWEIFRWASVQYQGFKHLPQACEIMASMLIREGMVKEVELLLMEMERHGDTMVNEGIFCDLIGKYVDDFDSRKAVMLFDWMRRKGLVPLTSCYQILIDQLVRVHRTESAYRICLDWVETRAELNHMNIDSIGKVIELLCLDQKVQEARVLARKLVALGCILNSSIYSKITIGYNEKQDFEDLLSFIGEVKYEPDVFVGNRILHSLCRRFGSERAYVYMEELEHLGFKQDEVTFGILIGWCCYEGDIKRAVLYLSEIMSKGYKPDVYSYNAILSGLFRKGLWQHTHCILDEMKENGMMLSLSTFKIMVTGYCKARQFEEAKRIVNKMFGYGLIEASKVEDPLSEAFSLVGFDPLAVRLKRDNDSTFSKAEFFDDLGNGLYLHTDLDAYEQRVNMVLDRSVLPEFNSLIVRASEDGDLQTALRLLDEMARWGQKLSRRSFAVLMRSLCASRAHLRVSISLLEKWPKLAYQLDGETLNFLVQEYCKKGFSRHSKLIFHKMVQMHHPIDNVTYTSLIRCFCKKETLNDLLNVWGAAQNDNWLPDLNDCGDLWNCLVRKGLVEEVVQLFERVFISYPLSQSEACRIFVEKLTVLGFSCIAHSVVKRLEGEGCIVEQEVYNHLIKGLCTEKKDSAAFAILDEMLDKKHIPSLGSCLMLIPRLCRANKAGTAFNLAEQIDSSYVHYALIKGLSLAGKMLDAENQLRIMLSNGLSSYNKIYNVMFQGYCKGNNWMKVEEVLGLMVRKNIICSVKSYREYVRKMCLEPQSLSAISLKEFLLLGESNPGGVIIYNMLIFYMFRAKNHLEVNKVLLEMQGRGVLPDETTFNFLVHGYSSSADYSSSLRYLSAMISKGMKPNNRSLRAVTSSLCDNGDVKKALDLWQVMESKGWNLGSSVVQTKIVETLISKGEIPKAEDFLTRVTRNGMMAPNYDNIIKKLSDRGNLDIAVHLLNTMLKNQSIPGSSSYDSVINGLLRYNQLDKAMDFHTEMVELGLSPSISTWSGLVHKFCEACQVLESERLIKSMVGLGESPSQEMFKTVIDRFRVEKNTVKASEMMEMMQKCGYEVDFETHWSLISNMSSSKEKKTTTAGEGFLSRLLSGNGFTWKR</sequence>
<name>PP384_ARATH</name>
<dbReference type="EMBL" id="AL353993">
    <property type="protein sequence ID" value="CAB89338.1"/>
    <property type="molecule type" value="Genomic_DNA"/>
</dbReference>
<dbReference type="EMBL" id="CP002688">
    <property type="protein sequence ID" value="AED92143.1"/>
    <property type="molecule type" value="Genomic_DNA"/>
</dbReference>
<dbReference type="EMBL" id="AK227133">
    <property type="status" value="NOT_ANNOTATED_CDS"/>
    <property type="molecule type" value="mRNA"/>
</dbReference>
<dbReference type="PIR" id="T49963">
    <property type="entry name" value="T49963"/>
</dbReference>
<dbReference type="RefSeq" id="NP_197032.1">
    <property type="nucleotide sequence ID" value="NM_121532.4"/>
</dbReference>
<dbReference type="SMR" id="Q9LXF4"/>
<dbReference type="FunCoup" id="Q9LXF4">
    <property type="interactions" value="1502"/>
</dbReference>
<dbReference type="STRING" id="3702.Q9LXF4"/>
<dbReference type="PaxDb" id="3702-AT5G15280.1"/>
<dbReference type="EnsemblPlants" id="AT5G15280.1">
    <property type="protein sequence ID" value="AT5G15280.1"/>
    <property type="gene ID" value="AT5G15280"/>
</dbReference>
<dbReference type="GeneID" id="831380"/>
<dbReference type="Gramene" id="AT5G15280.1">
    <property type="protein sequence ID" value="AT5G15280.1"/>
    <property type="gene ID" value="AT5G15280"/>
</dbReference>
<dbReference type="KEGG" id="ath:AT5G15280"/>
<dbReference type="Araport" id="AT5G15280"/>
<dbReference type="TAIR" id="AT5G15280"/>
<dbReference type="eggNOG" id="KOG4197">
    <property type="taxonomic scope" value="Eukaryota"/>
</dbReference>
<dbReference type="HOGENOM" id="CLU_002706_7_1_1"/>
<dbReference type="InParanoid" id="Q9LXF4"/>
<dbReference type="OMA" id="QWGHDIS"/>
<dbReference type="PhylomeDB" id="Q9LXF4"/>
<dbReference type="PRO" id="PR:Q9LXF4"/>
<dbReference type="Proteomes" id="UP000006548">
    <property type="component" value="Chromosome 5"/>
</dbReference>
<dbReference type="ExpressionAtlas" id="Q9LXF4">
    <property type="expression patterns" value="baseline and differential"/>
</dbReference>
<dbReference type="GO" id="GO:0005739">
    <property type="term" value="C:mitochondrion"/>
    <property type="evidence" value="ECO:0007669"/>
    <property type="project" value="UniProtKB-SubCell"/>
</dbReference>
<dbReference type="Gene3D" id="1.25.40.10">
    <property type="entry name" value="Tetratricopeptide repeat domain"/>
    <property type="match status" value="6"/>
</dbReference>
<dbReference type="InterPro" id="IPR002885">
    <property type="entry name" value="Pentatricopeptide_rpt"/>
</dbReference>
<dbReference type="InterPro" id="IPR050872">
    <property type="entry name" value="PPR_P_subfamily"/>
</dbReference>
<dbReference type="InterPro" id="IPR011990">
    <property type="entry name" value="TPR-like_helical_dom_sf"/>
</dbReference>
<dbReference type="NCBIfam" id="TIGR00756">
    <property type="entry name" value="PPR"/>
    <property type="match status" value="8"/>
</dbReference>
<dbReference type="PANTHER" id="PTHR46128">
    <property type="entry name" value="MITOCHONDRIAL GROUP I INTRON SPLICING FACTOR CCM1"/>
    <property type="match status" value="1"/>
</dbReference>
<dbReference type="PANTHER" id="PTHR46128:SF329">
    <property type="entry name" value="MITOCHONDRIAL GROUP I INTRON SPLICING FACTOR DMR1"/>
    <property type="match status" value="1"/>
</dbReference>
<dbReference type="Pfam" id="PF01535">
    <property type="entry name" value="PPR"/>
    <property type="match status" value="7"/>
</dbReference>
<dbReference type="Pfam" id="PF13041">
    <property type="entry name" value="PPR_2"/>
    <property type="match status" value="3"/>
</dbReference>
<dbReference type="PROSITE" id="PS51375">
    <property type="entry name" value="PPR"/>
    <property type="match status" value="22"/>
</dbReference>
<accession>Q9LXF4</accession>
<gene>
    <name type="ordered locus">At5g15280</name>
    <name type="ORF">F8M21_170</name>
</gene>
<keyword id="KW-0496">Mitochondrion</keyword>
<keyword id="KW-1185">Reference proteome</keyword>
<keyword id="KW-0677">Repeat</keyword>
<keyword id="KW-0809">Transit peptide</keyword>
<evidence type="ECO:0000269" key="1">
    <source>
    </source>
</evidence>
<evidence type="ECO:0000305" key="2"/>
<evidence type="ECO:0000305" key="3">
    <source>
    </source>
</evidence>
<reference key="1">
    <citation type="journal article" date="2000" name="Nature">
        <title>Sequence and analysis of chromosome 5 of the plant Arabidopsis thaliana.</title>
        <authorList>
            <person name="Tabata S."/>
            <person name="Kaneko T."/>
            <person name="Nakamura Y."/>
            <person name="Kotani H."/>
            <person name="Kato T."/>
            <person name="Asamizu E."/>
            <person name="Miyajima N."/>
            <person name="Sasamoto S."/>
            <person name="Kimura T."/>
            <person name="Hosouchi T."/>
            <person name="Kawashima K."/>
            <person name="Kohara M."/>
            <person name="Matsumoto M."/>
            <person name="Matsuno A."/>
            <person name="Muraki A."/>
            <person name="Nakayama S."/>
            <person name="Nakazaki N."/>
            <person name="Naruo K."/>
            <person name="Okumura S."/>
            <person name="Shinpo S."/>
            <person name="Takeuchi C."/>
            <person name="Wada T."/>
            <person name="Watanabe A."/>
            <person name="Yamada M."/>
            <person name="Yasuda M."/>
            <person name="Sato S."/>
            <person name="de la Bastide M."/>
            <person name="Huang E."/>
            <person name="Spiegel L."/>
            <person name="Gnoj L."/>
            <person name="O'Shaughnessy A."/>
            <person name="Preston R."/>
            <person name="Habermann K."/>
            <person name="Murray J."/>
            <person name="Johnson D."/>
            <person name="Rohlfing T."/>
            <person name="Nelson J."/>
            <person name="Stoneking T."/>
            <person name="Pepin K."/>
            <person name="Spieth J."/>
            <person name="Sekhon M."/>
            <person name="Armstrong J."/>
            <person name="Becker M."/>
            <person name="Belter E."/>
            <person name="Cordum H."/>
            <person name="Cordes M."/>
            <person name="Courtney L."/>
            <person name="Courtney W."/>
            <person name="Dante M."/>
            <person name="Du H."/>
            <person name="Edwards J."/>
            <person name="Fryman J."/>
            <person name="Haakensen B."/>
            <person name="Lamar E."/>
            <person name="Latreille P."/>
            <person name="Leonard S."/>
            <person name="Meyer R."/>
            <person name="Mulvaney E."/>
            <person name="Ozersky P."/>
            <person name="Riley A."/>
            <person name="Strowmatt C."/>
            <person name="Wagner-McPherson C."/>
            <person name="Wollam A."/>
            <person name="Yoakum M."/>
            <person name="Bell M."/>
            <person name="Dedhia N."/>
            <person name="Parnell L."/>
            <person name="Shah R."/>
            <person name="Rodriguez M."/>
            <person name="Hoon See L."/>
            <person name="Vil D."/>
            <person name="Baker J."/>
            <person name="Kirchoff K."/>
            <person name="Toth K."/>
            <person name="King L."/>
            <person name="Bahret A."/>
            <person name="Miller B."/>
            <person name="Marra M.A."/>
            <person name="Martienssen R."/>
            <person name="McCombie W.R."/>
            <person name="Wilson R.K."/>
            <person name="Murphy G."/>
            <person name="Bancroft I."/>
            <person name="Volckaert G."/>
            <person name="Wambutt R."/>
            <person name="Duesterhoeft A."/>
            <person name="Stiekema W."/>
            <person name="Pohl T."/>
            <person name="Entian K.-D."/>
            <person name="Terryn N."/>
            <person name="Hartley N."/>
            <person name="Bent E."/>
            <person name="Johnson S."/>
            <person name="Langham S.-A."/>
            <person name="McCullagh B."/>
            <person name="Robben J."/>
            <person name="Grymonprez B."/>
            <person name="Zimmermann W."/>
            <person name="Ramsperger U."/>
            <person name="Wedler H."/>
            <person name="Balke K."/>
            <person name="Wedler E."/>
            <person name="Peters S."/>
            <person name="van Staveren M."/>
            <person name="Dirkse W."/>
            <person name="Mooijman P."/>
            <person name="Klein Lankhorst R."/>
            <person name="Weitzenegger T."/>
            <person name="Bothe G."/>
            <person name="Rose M."/>
            <person name="Hauf J."/>
            <person name="Berneiser S."/>
            <person name="Hempel S."/>
            <person name="Feldpausch M."/>
            <person name="Lamberth S."/>
            <person name="Villarroel R."/>
            <person name="Gielen J."/>
            <person name="Ardiles W."/>
            <person name="Bents O."/>
            <person name="Lemcke K."/>
            <person name="Kolesov G."/>
            <person name="Mayer K.F.X."/>
            <person name="Rudd S."/>
            <person name="Schoof H."/>
            <person name="Schueller C."/>
            <person name="Zaccaria P."/>
            <person name="Mewes H.-W."/>
            <person name="Bevan M."/>
            <person name="Fransz P.F."/>
        </authorList>
    </citation>
    <scope>NUCLEOTIDE SEQUENCE [LARGE SCALE GENOMIC DNA]</scope>
    <source>
        <strain>cv. Columbia</strain>
    </source>
</reference>
<reference key="2">
    <citation type="journal article" date="2017" name="Plant J.">
        <title>Araport11: a complete reannotation of the Arabidopsis thaliana reference genome.</title>
        <authorList>
            <person name="Cheng C.Y."/>
            <person name="Krishnakumar V."/>
            <person name="Chan A.P."/>
            <person name="Thibaud-Nissen F."/>
            <person name="Schobel S."/>
            <person name="Town C.D."/>
        </authorList>
    </citation>
    <scope>GENOME REANNOTATION</scope>
    <source>
        <strain>cv. Columbia</strain>
    </source>
</reference>
<reference key="3">
    <citation type="submission" date="2006-07" db="EMBL/GenBank/DDBJ databases">
        <title>Large-scale analysis of RIKEN Arabidopsis full-length (RAFL) cDNAs.</title>
        <authorList>
            <person name="Totoki Y."/>
            <person name="Seki M."/>
            <person name="Ishida J."/>
            <person name="Nakajima M."/>
            <person name="Enju A."/>
            <person name="Kamiya A."/>
            <person name="Narusaka M."/>
            <person name="Shin-i T."/>
            <person name="Nakagawa M."/>
            <person name="Sakamoto N."/>
            <person name="Oishi K."/>
            <person name="Kohara Y."/>
            <person name="Kobayashi M."/>
            <person name="Toyoda A."/>
            <person name="Sakaki Y."/>
            <person name="Sakurai T."/>
            <person name="Iida K."/>
            <person name="Akiyama K."/>
            <person name="Satou M."/>
            <person name="Toyoda T."/>
            <person name="Konagaya A."/>
            <person name="Carninci P."/>
            <person name="Kawai J."/>
            <person name="Hayashizaki Y."/>
            <person name="Shinozaki K."/>
        </authorList>
    </citation>
    <scope>NUCLEOTIDE SEQUENCE [LARGE SCALE MRNA] OF 900-1227</scope>
    <source>
        <strain>cv. Columbia</strain>
    </source>
</reference>
<reference key="4">
    <citation type="journal article" date="2004" name="Plant Cell">
        <title>Genome-wide analysis of Arabidopsis pentatricopeptide repeat proteins reveals their essential role in organelle biogenesis.</title>
        <authorList>
            <person name="Lurin C."/>
            <person name="Andres C."/>
            <person name="Aubourg S."/>
            <person name="Bellaoui M."/>
            <person name="Bitton F."/>
            <person name="Bruyere C."/>
            <person name="Caboche M."/>
            <person name="Debast C."/>
            <person name="Gualberto J."/>
            <person name="Hoffmann B."/>
            <person name="Lecharny A."/>
            <person name="Le Ret M."/>
            <person name="Martin-Magniette M.-L."/>
            <person name="Mireau H."/>
            <person name="Peeters N."/>
            <person name="Renou J.-P."/>
            <person name="Szurek B."/>
            <person name="Taconnat L."/>
            <person name="Small I."/>
        </authorList>
    </citation>
    <scope>GENE FAMILY</scope>
</reference>
<reference key="5">
    <citation type="journal article" date="2015" name="J. Exp. Bot.">
        <title>Identification of cleavage sites and substrate proteins for two mitochondrial intermediate peptidases in Arabidopsis thaliana.</title>
        <authorList>
            <person name="Carrie C."/>
            <person name="Venne A.S."/>
            <person name="Zahedi R.P."/>
            <person name="Soll J."/>
        </authorList>
    </citation>
    <scope>IDENTIFICATION BY MASS SPECTROMETRY</scope>
    <scope>CLEAVAGE OF TRANSIT PEPTIDE AFTER PHE-31</scope>
</reference>
<proteinExistence type="evidence at protein level"/>
<organism>
    <name type="scientific">Arabidopsis thaliana</name>
    <name type="common">Mouse-ear cress</name>
    <dbReference type="NCBI Taxonomy" id="3702"/>
    <lineage>
        <taxon>Eukaryota</taxon>
        <taxon>Viridiplantae</taxon>
        <taxon>Streptophyta</taxon>
        <taxon>Embryophyta</taxon>
        <taxon>Tracheophyta</taxon>
        <taxon>Spermatophyta</taxon>
        <taxon>Magnoliopsida</taxon>
        <taxon>eudicotyledons</taxon>
        <taxon>Gunneridae</taxon>
        <taxon>Pentapetalae</taxon>
        <taxon>rosids</taxon>
        <taxon>malvids</taxon>
        <taxon>Brassicales</taxon>
        <taxon>Brassicaceae</taxon>
        <taxon>Camelineae</taxon>
        <taxon>Arabidopsis</taxon>
    </lineage>
</organism>
<feature type="transit peptide" description="Mitochondrion" evidence="1">
    <location>
        <begin position="1"/>
        <end position="31"/>
    </location>
</feature>
<feature type="chain" id="PRO_0000363521" description="Pentatricopeptide repeat-containing protein At5g15280, mitochondrial">
    <location>
        <begin position="32"/>
        <end position="1227"/>
    </location>
</feature>
<feature type="repeat" description="PPR 1">
    <location>
        <begin position="146"/>
        <end position="180"/>
    </location>
</feature>
<feature type="repeat" description="PPR 2">
    <location>
        <begin position="182"/>
        <end position="216"/>
    </location>
</feature>
<feature type="repeat" description="PPR 3">
    <location>
        <begin position="217"/>
        <end position="251"/>
    </location>
</feature>
<feature type="repeat" description="PPR 4">
    <location>
        <begin position="255"/>
        <end position="289"/>
    </location>
</feature>
<feature type="repeat" description="PPR 5">
    <location>
        <begin position="290"/>
        <end position="320"/>
    </location>
</feature>
<feature type="repeat" description="PPR 6">
    <location>
        <begin position="322"/>
        <end position="356"/>
    </location>
</feature>
<feature type="repeat" description="PPR 7">
    <location>
        <begin position="357"/>
        <end position="391"/>
    </location>
</feature>
<feature type="repeat" description="PPR 8">
    <location>
        <begin position="392"/>
        <end position="426"/>
    </location>
</feature>
<feature type="repeat" description="PPR 9">
    <location>
        <begin position="427"/>
        <end position="461"/>
    </location>
</feature>
<feature type="repeat" description="PPR 10">
    <location>
        <begin position="527"/>
        <end position="561"/>
    </location>
</feature>
<feature type="repeat" description="PPR 11">
    <location>
        <begin position="562"/>
        <end position="597"/>
    </location>
</feature>
<feature type="repeat" description="PPR 12">
    <location>
        <begin position="598"/>
        <end position="632"/>
    </location>
</feature>
<feature type="repeat" description="PPR 13">
    <location>
        <begin position="633"/>
        <end position="667"/>
    </location>
</feature>
<feature type="repeat" description="PPR 14">
    <location>
        <begin position="668"/>
        <end position="698"/>
    </location>
</feature>
<feature type="repeat" description="PPR 15">
    <location>
        <begin position="703"/>
        <end position="737"/>
    </location>
</feature>
<feature type="repeat" description="PPR 16">
    <location>
        <begin position="738"/>
        <end position="772"/>
    </location>
</feature>
<feature type="repeat" description="PPR 17">
    <location>
        <begin position="773"/>
        <end position="800"/>
    </location>
</feature>
<feature type="repeat" description="PPR 18">
    <location>
        <begin position="802"/>
        <end position="836"/>
    </location>
</feature>
<feature type="repeat" description="PPR 19">
    <location>
        <begin position="837"/>
        <end position="871"/>
    </location>
</feature>
<feature type="repeat" description="PPR 20">
    <location>
        <begin position="872"/>
        <end position="906"/>
    </location>
</feature>
<feature type="repeat" description="PPR 21">
    <location>
        <begin position="908"/>
        <end position="942"/>
    </location>
</feature>
<feature type="repeat" description="PPR 22">
    <location>
        <begin position="943"/>
        <end position="977"/>
    </location>
</feature>
<feature type="repeat" description="PPR 23">
    <location>
        <begin position="978"/>
        <end position="1012"/>
    </location>
</feature>
<feature type="repeat" description="PPR 24">
    <location>
        <begin position="1014"/>
        <end position="1044"/>
    </location>
</feature>
<feature type="repeat" description="PPR 25">
    <location>
        <begin position="1047"/>
        <end position="1081"/>
    </location>
</feature>
<feature type="repeat" description="PPR 26">
    <location>
        <begin position="1082"/>
        <end position="1116"/>
    </location>
</feature>
<feature type="repeat" description="PPR 27">
    <location>
        <begin position="1117"/>
        <end position="1151"/>
    </location>
</feature>
<feature type="repeat" description="PPR 28">
    <location>
        <begin position="1152"/>
        <end position="1186"/>
    </location>
</feature>
<comment type="subcellular location">
    <subcellularLocation>
        <location evidence="3">Mitochondrion</location>
    </subcellularLocation>
</comment>
<comment type="similarity">
    <text evidence="2">Belongs to the PPR family. P subfamily.</text>
</comment>
<comment type="sequence caution" evidence="2">
    <conflict type="frameshift">
        <sequence resource="EMBL" id="AK227133"/>
    </conflict>
</comment>
<comment type="online information" name="Pentatricopeptide repeat proteins">
    <link uri="https://ppr.plantenergy.uwa.edu.au"/>
</comment>